<proteinExistence type="inferred from homology"/>
<comment type="function">
    <text evidence="1">Involved in the binding of tRNA to the ribosomes.</text>
</comment>
<comment type="subunit">
    <text evidence="1">Part of the 30S ribosomal subunit.</text>
</comment>
<comment type="similarity">
    <text evidence="1">Belongs to the universal ribosomal protein uS10 family.</text>
</comment>
<name>RS10_NOVAD</name>
<evidence type="ECO:0000255" key="1">
    <source>
        <dbReference type="HAMAP-Rule" id="MF_00508"/>
    </source>
</evidence>
<evidence type="ECO:0000305" key="2"/>
<sequence length="103" mass="11589">MEAQNIRIRLKAFDHRVLDQATGEIADTARRTGALIRGPIPLPTRIEKFCVNRGPHIDKKSREQFEVRTYKRLLDIVQPNAATVDALMKLDLAAGVNVEIKLA</sequence>
<accession>Q2G8Y1</accession>
<keyword id="KW-1185">Reference proteome</keyword>
<keyword id="KW-0687">Ribonucleoprotein</keyword>
<keyword id="KW-0689">Ribosomal protein</keyword>
<dbReference type="EMBL" id="CP000248">
    <property type="protein sequence ID" value="ABD25692.1"/>
    <property type="molecule type" value="Genomic_DNA"/>
</dbReference>
<dbReference type="RefSeq" id="WP_011444906.1">
    <property type="nucleotide sequence ID" value="NC_007794.1"/>
</dbReference>
<dbReference type="SMR" id="Q2G8Y1"/>
<dbReference type="STRING" id="279238.Saro_1248"/>
<dbReference type="KEGG" id="nar:Saro_1248"/>
<dbReference type="eggNOG" id="COG0051">
    <property type="taxonomic scope" value="Bacteria"/>
</dbReference>
<dbReference type="HOGENOM" id="CLU_122625_1_3_5"/>
<dbReference type="Proteomes" id="UP000009134">
    <property type="component" value="Chromosome"/>
</dbReference>
<dbReference type="GO" id="GO:1990904">
    <property type="term" value="C:ribonucleoprotein complex"/>
    <property type="evidence" value="ECO:0007669"/>
    <property type="project" value="UniProtKB-KW"/>
</dbReference>
<dbReference type="GO" id="GO:0005840">
    <property type="term" value="C:ribosome"/>
    <property type="evidence" value="ECO:0007669"/>
    <property type="project" value="UniProtKB-KW"/>
</dbReference>
<dbReference type="GO" id="GO:0003735">
    <property type="term" value="F:structural constituent of ribosome"/>
    <property type="evidence" value="ECO:0007669"/>
    <property type="project" value="InterPro"/>
</dbReference>
<dbReference type="GO" id="GO:0000049">
    <property type="term" value="F:tRNA binding"/>
    <property type="evidence" value="ECO:0007669"/>
    <property type="project" value="UniProtKB-UniRule"/>
</dbReference>
<dbReference type="GO" id="GO:0006412">
    <property type="term" value="P:translation"/>
    <property type="evidence" value="ECO:0007669"/>
    <property type="project" value="UniProtKB-UniRule"/>
</dbReference>
<dbReference type="FunFam" id="3.30.70.600:FF:000003">
    <property type="entry name" value="30S ribosomal protein S10"/>
    <property type="match status" value="1"/>
</dbReference>
<dbReference type="Gene3D" id="3.30.70.600">
    <property type="entry name" value="Ribosomal protein S10 domain"/>
    <property type="match status" value="1"/>
</dbReference>
<dbReference type="HAMAP" id="MF_00508">
    <property type="entry name" value="Ribosomal_uS10"/>
    <property type="match status" value="1"/>
</dbReference>
<dbReference type="InterPro" id="IPR001848">
    <property type="entry name" value="Ribosomal_uS10"/>
</dbReference>
<dbReference type="InterPro" id="IPR018268">
    <property type="entry name" value="Ribosomal_uS10_CS"/>
</dbReference>
<dbReference type="InterPro" id="IPR027486">
    <property type="entry name" value="Ribosomal_uS10_dom"/>
</dbReference>
<dbReference type="InterPro" id="IPR036838">
    <property type="entry name" value="Ribosomal_uS10_dom_sf"/>
</dbReference>
<dbReference type="NCBIfam" id="NF001861">
    <property type="entry name" value="PRK00596.1"/>
    <property type="match status" value="1"/>
</dbReference>
<dbReference type="NCBIfam" id="TIGR01049">
    <property type="entry name" value="rpsJ_bact"/>
    <property type="match status" value="1"/>
</dbReference>
<dbReference type="PANTHER" id="PTHR11700">
    <property type="entry name" value="30S RIBOSOMAL PROTEIN S10 FAMILY MEMBER"/>
    <property type="match status" value="1"/>
</dbReference>
<dbReference type="Pfam" id="PF00338">
    <property type="entry name" value="Ribosomal_S10"/>
    <property type="match status" value="1"/>
</dbReference>
<dbReference type="PRINTS" id="PR00971">
    <property type="entry name" value="RIBOSOMALS10"/>
</dbReference>
<dbReference type="SMART" id="SM01403">
    <property type="entry name" value="Ribosomal_S10"/>
    <property type="match status" value="1"/>
</dbReference>
<dbReference type="SUPFAM" id="SSF54999">
    <property type="entry name" value="Ribosomal protein S10"/>
    <property type="match status" value="1"/>
</dbReference>
<dbReference type="PROSITE" id="PS00361">
    <property type="entry name" value="RIBOSOMAL_S10"/>
    <property type="match status" value="1"/>
</dbReference>
<feature type="chain" id="PRO_0000237073" description="Small ribosomal subunit protein uS10">
    <location>
        <begin position="1"/>
        <end position="103"/>
    </location>
</feature>
<protein>
    <recommendedName>
        <fullName evidence="1">Small ribosomal subunit protein uS10</fullName>
    </recommendedName>
    <alternativeName>
        <fullName evidence="2">30S ribosomal protein S10</fullName>
    </alternativeName>
</protein>
<reference key="1">
    <citation type="submission" date="2006-01" db="EMBL/GenBank/DDBJ databases">
        <title>Complete sequence of Novosphingobium aromaticivorans DSM 12444.</title>
        <authorList>
            <consortium name="US DOE Joint Genome Institute"/>
            <person name="Copeland A."/>
            <person name="Lucas S."/>
            <person name="Lapidus A."/>
            <person name="Barry K."/>
            <person name="Detter J.C."/>
            <person name="Glavina T."/>
            <person name="Hammon N."/>
            <person name="Israni S."/>
            <person name="Pitluck S."/>
            <person name="Chain P."/>
            <person name="Malfatti S."/>
            <person name="Shin M."/>
            <person name="Vergez L."/>
            <person name="Schmutz J."/>
            <person name="Larimer F."/>
            <person name="Land M."/>
            <person name="Kyrpides N."/>
            <person name="Ivanova N."/>
            <person name="Fredrickson J."/>
            <person name="Balkwill D."/>
            <person name="Romine M.F."/>
            <person name="Richardson P."/>
        </authorList>
    </citation>
    <scope>NUCLEOTIDE SEQUENCE [LARGE SCALE GENOMIC DNA]</scope>
    <source>
        <strain>ATCC 700278 / DSM 12444 / CCUG 56034 / CIP 105152 / NBRC 16084 / F199</strain>
    </source>
</reference>
<gene>
    <name evidence="1" type="primary">rpsJ</name>
    <name type="ordered locus">Saro_1248</name>
</gene>
<organism>
    <name type="scientific">Novosphingobium aromaticivorans (strain ATCC 700278 / DSM 12444 / CCUG 56034 / CIP 105152 / NBRC 16084 / F199)</name>
    <dbReference type="NCBI Taxonomy" id="279238"/>
    <lineage>
        <taxon>Bacteria</taxon>
        <taxon>Pseudomonadati</taxon>
        <taxon>Pseudomonadota</taxon>
        <taxon>Alphaproteobacteria</taxon>
        <taxon>Sphingomonadales</taxon>
        <taxon>Sphingomonadaceae</taxon>
        <taxon>Novosphingobium</taxon>
    </lineage>
</organism>